<name>STP8_ARATH</name>
<evidence type="ECO:0000250" key="1"/>
<evidence type="ECO:0000255" key="2"/>
<evidence type="ECO:0000305" key="3"/>
<accession>Q9SBA7</accession>
<accession>O81492</accession>
<accession>Q0WLP9</accession>
<proteinExistence type="evidence at transcript level"/>
<keyword id="KW-0472">Membrane</keyword>
<keyword id="KW-1185">Reference proteome</keyword>
<keyword id="KW-0762">Sugar transport</keyword>
<keyword id="KW-0769">Symport</keyword>
<keyword id="KW-0812">Transmembrane</keyword>
<keyword id="KW-1133">Transmembrane helix</keyword>
<keyword id="KW-0813">Transport</keyword>
<gene>
    <name type="primary">STP8</name>
    <name type="ordered locus">At5g26250</name>
    <name type="ORF">F9D12.9</name>
    <name type="ORF">T19G15.100</name>
</gene>
<organism>
    <name type="scientific">Arabidopsis thaliana</name>
    <name type="common">Mouse-ear cress</name>
    <dbReference type="NCBI Taxonomy" id="3702"/>
    <lineage>
        <taxon>Eukaryota</taxon>
        <taxon>Viridiplantae</taxon>
        <taxon>Streptophyta</taxon>
        <taxon>Embryophyta</taxon>
        <taxon>Tracheophyta</taxon>
        <taxon>Spermatophyta</taxon>
        <taxon>Magnoliopsida</taxon>
        <taxon>eudicotyledons</taxon>
        <taxon>Gunneridae</taxon>
        <taxon>Pentapetalae</taxon>
        <taxon>rosids</taxon>
        <taxon>malvids</taxon>
        <taxon>Brassicales</taxon>
        <taxon>Brassicaceae</taxon>
        <taxon>Camelineae</taxon>
        <taxon>Arabidopsis</taxon>
    </lineage>
</organism>
<reference key="1">
    <citation type="submission" date="2001-09" db="EMBL/GenBank/DDBJ databases">
        <title>STP8 a new Arabidopsis monosaccharide transporter.</title>
        <authorList>
            <person name="Buettner M."/>
        </authorList>
    </citation>
    <scope>NUCLEOTIDE SEQUENCE [MRNA]</scope>
</reference>
<reference key="2">
    <citation type="journal article" date="2000" name="Nature">
        <title>Sequence and analysis of chromosome 5 of the plant Arabidopsis thaliana.</title>
        <authorList>
            <person name="Tabata S."/>
            <person name="Kaneko T."/>
            <person name="Nakamura Y."/>
            <person name="Kotani H."/>
            <person name="Kato T."/>
            <person name="Asamizu E."/>
            <person name="Miyajima N."/>
            <person name="Sasamoto S."/>
            <person name="Kimura T."/>
            <person name="Hosouchi T."/>
            <person name="Kawashima K."/>
            <person name="Kohara M."/>
            <person name="Matsumoto M."/>
            <person name="Matsuno A."/>
            <person name="Muraki A."/>
            <person name="Nakayama S."/>
            <person name="Nakazaki N."/>
            <person name="Naruo K."/>
            <person name="Okumura S."/>
            <person name="Shinpo S."/>
            <person name="Takeuchi C."/>
            <person name="Wada T."/>
            <person name="Watanabe A."/>
            <person name="Yamada M."/>
            <person name="Yasuda M."/>
            <person name="Sato S."/>
            <person name="de la Bastide M."/>
            <person name="Huang E."/>
            <person name="Spiegel L."/>
            <person name="Gnoj L."/>
            <person name="O'Shaughnessy A."/>
            <person name="Preston R."/>
            <person name="Habermann K."/>
            <person name="Murray J."/>
            <person name="Johnson D."/>
            <person name="Rohlfing T."/>
            <person name="Nelson J."/>
            <person name="Stoneking T."/>
            <person name="Pepin K."/>
            <person name="Spieth J."/>
            <person name="Sekhon M."/>
            <person name="Armstrong J."/>
            <person name="Becker M."/>
            <person name="Belter E."/>
            <person name="Cordum H."/>
            <person name="Cordes M."/>
            <person name="Courtney L."/>
            <person name="Courtney W."/>
            <person name="Dante M."/>
            <person name="Du H."/>
            <person name="Edwards J."/>
            <person name="Fryman J."/>
            <person name="Haakensen B."/>
            <person name="Lamar E."/>
            <person name="Latreille P."/>
            <person name="Leonard S."/>
            <person name="Meyer R."/>
            <person name="Mulvaney E."/>
            <person name="Ozersky P."/>
            <person name="Riley A."/>
            <person name="Strowmatt C."/>
            <person name="Wagner-McPherson C."/>
            <person name="Wollam A."/>
            <person name="Yoakum M."/>
            <person name="Bell M."/>
            <person name="Dedhia N."/>
            <person name="Parnell L."/>
            <person name="Shah R."/>
            <person name="Rodriguez M."/>
            <person name="Hoon See L."/>
            <person name="Vil D."/>
            <person name="Baker J."/>
            <person name="Kirchoff K."/>
            <person name="Toth K."/>
            <person name="King L."/>
            <person name="Bahret A."/>
            <person name="Miller B."/>
            <person name="Marra M.A."/>
            <person name="Martienssen R."/>
            <person name="McCombie W.R."/>
            <person name="Wilson R.K."/>
            <person name="Murphy G."/>
            <person name="Bancroft I."/>
            <person name="Volckaert G."/>
            <person name="Wambutt R."/>
            <person name="Duesterhoeft A."/>
            <person name="Stiekema W."/>
            <person name="Pohl T."/>
            <person name="Entian K.-D."/>
            <person name="Terryn N."/>
            <person name="Hartley N."/>
            <person name="Bent E."/>
            <person name="Johnson S."/>
            <person name="Langham S.-A."/>
            <person name="McCullagh B."/>
            <person name="Robben J."/>
            <person name="Grymonprez B."/>
            <person name="Zimmermann W."/>
            <person name="Ramsperger U."/>
            <person name="Wedler H."/>
            <person name="Balke K."/>
            <person name="Wedler E."/>
            <person name="Peters S."/>
            <person name="van Staveren M."/>
            <person name="Dirkse W."/>
            <person name="Mooijman P."/>
            <person name="Klein Lankhorst R."/>
            <person name="Weitzenegger T."/>
            <person name="Bothe G."/>
            <person name="Rose M."/>
            <person name="Hauf J."/>
            <person name="Berneiser S."/>
            <person name="Hempel S."/>
            <person name="Feldpausch M."/>
            <person name="Lamberth S."/>
            <person name="Villarroel R."/>
            <person name="Gielen J."/>
            <person name="Ardiles W."/>
            <person name="Bents O."/>
            <person name="Lemcke K."/>
            <person name="Kolesov G."/>
            <person name="Mayer K.F.X."/>
            <person name="Rudd S."/>
            <person name="Schoof H."/>
            <person name="Schueller C."/>
            <person name="Zaccaria P."/>
            <person name="Mewes H.-W."/>
            <person name="Bevan M."/>
            <person name="Fransz P.F."/>
        </authorList>
    </citation>
    <scope>NUCLEOTIDE SEQUENCE [LARGE SCALE GENOMIC DNA]</scope>
    <source>
        <strain>cv. Columbia</strain>
    </source>
</reference>
<reference key="3">
    <citation type="journal article" date="2017" name="Plant J.">
        <title>Araport11: a complete reannotation of the Arabidopsis thaliana reference genome.</title>
        <authorList>
            <person name="Cheng C.Y."/>
            <person name="Krishnakumar V."/>
            <person name="Chan A.P."/>
            <person name="Thibaud-Nissen F."/>
            <person name="Schobel S."/>
            <person name="Town C.D."/>
        </authorList>
    </citation>
    <scope>GENOME REANNOTATION</scope>
    <source>
        <strain>cv. Columbia</strain>
    </source>
</reference>
<reference key="4">
    <citation type="submission" date="2006-07" db="EMBL/GenBank/DDBJ databases">
        <title>Large-scale analysis of RIKEN Arabidopsis full-length (RAFL) cDNAs.</title>
        <authorList>
            <person name="Totoki Y."/>
            <person name="Seki M."/>
            <person name="Ishida J."/>
            <person name="Nakajima M."/>
            <person name="Enju A."/>
            <person name="Kamiya A."/>
            <person name="Narusaka M."/>
            <person name="Shin-i T."/>
            <person name="Nakagawa M."/>
            <person name="Sakamoto N."/>
            <person name="Oishi K."/>
            <person name="Kohara Y."/>
            <person name="Kobayashi M."/>
            <person name="Toyoda A."/>
            <person name="Sakaki Y."/>
            <person name="Sakurai T."/>
            <person name="Iida K."/>
            <person name="Akiyama K."/>
            <person name="Satou M."/>
            <person name="Toyoda T."/>
            <person name="Konagaya A."/>
            <person name="Carninci P."/>
            <person name="Kawai J."/>
            <person name="Hayashizaki Y."/>
            <person name="Shinozaki K."/>
        </authorList>
    </citation>
    <scope>NUCLEOTIDE SEQUENCE [LARGE SCALE MRNA] OF 349-507</scope>
    <source>
        <strain>cv. Columbia</strain>
    </source>
</reference>
<reference key="5">
    <citation type="submission" date="1997-09" db="EMBL/GenBank/DDBJ databases">
        <title>AtSTP3, a new stress-regulated monosaccharide-H+ symporter from Arabidopsis thaliana.</title>
        <authorList>
            <person name="Baier K."/>
            <person name="Truernit E."/>
            <person name="Sauer N."/>
        </authorList>
    </citation>
    <scope>NUCLEOTIDE SEQUENCE [GENOMIC DNA] OF 401-468</scope>
    <source>
        <strain>cv. C24</strain>
    </source>
</reference>
<reference key="6">
    <citation type="journal article" date="2006" name="BMC Evol. Biol.">
        <title>The monosaccharide transporter gene family in land plants is ancient and shows differential subfamily expression and expansion across lineages.</title>
        <authorList>
            <person name="Johnson D.A."/>
            <person name="Hill J.P."/>
            <person name="Thomas M.A."/>
        </authorList>
    </citation>
    <scope>GENE FAMILY</scope>
</reference>
<sequence>MAVVISSNGNSKSFDAKMTVYVFICVIIAAVGGLIFGYDIGISGGVTAMDDFLKEFFPSVYERKKHAHENNYCKYDNQFLQLFTSSLYLAALVASFFASATCSKLGRRPTMQLASIFFLIGVGLAAGAVNIYMLIIGRILLGFGVGFGNQAVPLFLSEIAPARLRGGLNIVFQLMVTIGILIANIVNYFTSSIHPYGWRIALGGAGIPALILLFGSLLICETPTSLIERNKTKEGKETLKKIRGVEDVDEEYESIVHACDIARQVKDPYTKLMKPASRPPFVIGMLLQFFQQFTGINAIMFYAPVLFQTVGFGNDAALLSAVVTGTINVLSTFVGIFLVDKTGRRFLLLQSSVHMLICQLVIGIILAKDLDVTGTLARPQALVVVIFVCVYVMGFAWSWGPLGWLIPSETFPLETRTEGFALAVSCNMFFTFVIAQAFLSMLCAMKSGIFFFFSGWIVVMGLFALFFVPETKGVSIDDMRDSVWKLHWYWKRFMLEEDEHDVEKRTD</sequence>
<comment type="function">
    <text evidence="1">Mediates an active uptake of hexoses, probably by sugar/hydrogen symport.</text>
</comment>
<comment type="subcellular location">
    <subcellularLocation>
        <location>Membrane</location>
        <topology>Multi-pass membrane protein</topology>
    </subcellularLocation>
</comment>
<comment type="similarity">
    <text evidence="3">Belongs to the major facilitator superfamily. Sugar transporter (TC 2.A.1.1) family.</text>
</comment>
<feature type="chain" id="PRO_0000050438" description="Sugar transport protein 8">
    <location>
        <begin position="1"/>
        <end position="507"/>
    </location>
</feature>
<feature type="topological domain" description="Cytoplasmic" evidence="2">
    <location>
        <begin position="1"/>
        <end position="21"/>
    </location>
</feature>
<feature type="transmembrane region" description="Helical; Name=1" evidence="2">
    <location>
        <begin position="22"/>
        <end position="42"/>
    </location>
</feature>
<feature type="transmembrane region" description="Helical; Name=2" evidence="2">
    <location>
        <begin position="79"/>
        <end position="99"/>
    </location>
</feature>
<feature type="transmembrane region" description="Helical; Name=3" evidence="2">
    <location>
        <begin position="116"/>
        <end position="136"/>
    </location>
</feature>
<feature type="transmembrane region" description="Helical; Name=4" evidence="2">
    <location>
        <begin position="139"/>
        <end position="159"/>
    </location>
</feature>
<feature type="transmembrane region" description="Helical; Name=5" evidence="2">
    <location>
        <begin position="166"/>
        <end position="186"/>
    </location>
</feature>
<feature type="transmembrane region" description="Helical; Name=6" evidence="2">
    <location>
        <begin position="200"/>
        <end position="220"/>
    </location>
</feature>
<feature type="transmembrane region" description="Helical; Name=7" evidence="2">
    <location>
        <begin position="281"/>
        <end position="301"/>
    </location>
</feature>
<feature type="transmembrane region" description="Helical; Name=8" evidence="2">
    <location>
        <begin position="319"/>
        <end position="339"/>
    </location>
</feature>
<feature type="transmembrane region" description="Helical; Name=9" evidence="2">
    <location>
        <begin position="346"/>
        <end position="366"/>
    </location>
</feature>
<feature type="transmembrane region" description="Helical; Name=10" evidence="2">
    <location>
        <begin position="382"/>
        <end position="402"/>
    </location>
</feature>
<feature type="transmembrane region" description="Helical; Name=11" evidence="2">
    <location>
        <begin position="419"/>
        <end position="439"/>
    </location>
</feature>
<feature type="transmembrane region" description="Helical; Name=12" evidence="2">
    <location>
        <begin position="448"/>
        <end position="468"/>
    </location>
</feature>
<feature type="topological domain" description="Cytoplasmic" evidence="2">
    <location>
        <begin position="469"/>
        <end position="507"/>
    </location>
</feature>
<dbReference type="EMBL" id="AJ344332">
    <property type="protein sequence ID" value="CAC69068.1"/>
    <property type="molecule type" value="mRNA"/>
</dbReference>
<dbReference type="EMBL" id="AF077407">
    <property type="protein sequence ID" value="AAC26232.1"/>
    <property type="molecule type" value="Genomic_DNA"/>
</dbReference>
<dbReference type="EMBL" id="CP002688">
    <property type="protein sequence ID" value="AED93541.1"/>
    <property type="molecule type" value="Genomic_DNA"/>
</dbReference>
<dbReference type="EMBL" id="AK230144">
    <property type="protein sequence ID" value="BAF01958.1"/>
    <property type="molecule type" value="mRNA"/>
</dbReference>
<dbReference type="EMBL" id="AJ001661">
    <property type="protein sequence ID" value="CAA04906.1"/>
    <property type="molecule type" value="Genomic_DNA"/>
</dbReference>
<dbReference type="PIR" id="T01844">
    <property type="entry name" value="T01844"/>
</dbReference>
<dbReference type="RefSeq" id="NP_197997.1">
    <property type="nucleotide sequence ID" value="NM_122526.2"/>
</dbReference>
<dbReference type="SMR" id="Q9SBA7"/>
<dbReference type="BioGRID" id="17969">
    <property type="interactions" value="3"/>
</dbReference>
<dbReference type="FunCoup" id="Q9SBA7">
    <property type="interactions" value="38"/>
</dbReference>
<dbReference type="IntAct" id="Q9SBA7">
    <property type="interactions" value="1"/>
</dbReference>
<dbReference type="STRING" id="3702.Q9SBA7"/>
<dbReference type="PaxDb" id="3702-AT5G26250.1"/>
<dbReference type="ProteomicsDB" id="228359"/>
<dbReference type="EnsemblPlants" id="AT5G26250.1">
    <property type="protein sequence ID" value="AT5G26250.1"/>
    <property type="gene ID" value="AT5G26250"/>
</dbReference>
<dbReference type="GeneID" id="832694"/>
<dbReference type="Gramene" id="AT5G26250.1">
    <property type="protein sequence ID" value="AT5G26250.1"/>
    <property type="gene ID" value="AT5G26250"/>
</dbReference>
<dbReference type="KEGG" id="ath:AT5G26250"/>
<dbReference type="Araport" id="AT5G26250"/>
<dbReference type="TAIR" id="AT5G26250">
    <property type="gene designation" value="STP8"/>
</dbReference>
<dbReference type="eggNOG" id="KOG0254">
    <property type="taxonomic scope" value="Eukaryota"/>
</dbReference>
<dbReference type="HOGENOM" id="CLU_001265_30_5_1"/>
<dbReference type="InParanoid" id="Q9SBA7"/>
<dbReference type="OMA" id="VWGYNIG"/>
<dbReference type="PhylomeDB" id="Q9SBA7"/>
<dbReference type="PRO" id="PR:Q9SBA7"/>
<dbReference type="Proteomes" id="UP000006548">
    <property type="component" value="Chromosome 5"/>
</dbReference>
<dbReference type="ExpressionAtlas" id="Q9SBA7">
    <property type="expression patterns" value="baseline and differential"/>
</dbReference>
<dbReference type="GO" id="GO:0005886">
    <property type="term" value="C:plasma membrane"/>
    <property type="evidence" value="ECO:0000314"/>
    <property type="project" value="TAIR"/>
</dbReference>
<dbReference type="GO" id="GO:0090406">
    <property type="term" value="C:pollen tube"/>
    <property type="evidence" value="ECO:0000314"/>
    <property type="project" value="TAIR"/>
</dbReference>
<dbReference type="GO" id="GO:0015145">
    <property type="term" value="F:monosaccharide transmembrane transporter activity"/>
    <property type="evidence" value="ECO:0000314"/>
    <property type="project" value="TAIR"/>
</dbReference>
<dbReference type="GO" id="GO:0015293">
    <property type="term" value="F:symporter activity"/>
    <property type="evidence" value="ECO:0007669"/>
    <property type="project" value="UniProtKB-KW"/>
</dbReference>
<dbReference type="GO" id="GO:0015749">
    <property type="term" value="P:monosaccharide transmembrane transport"/>
    <property type="evidence" value="ECO:0000314"/>
    <property type="project" value="TAIR"/>
</dbReference>
<dbReference type="CDD" id="cd17361">
    <property type="entry name" value="MFS_STP"/>
    <property type="match status" value="1"/>
</dbReference>
<dbReference type="FunFam" id="1.20.1250.20:FF:000002">
    <property type="entry name" value="Sugar transport protein 13"/>
    <property type="match status" value="1"/>
</dbReference>
<dbReference type="Gene3D" id="1.20.1250.20">
    <property type="entry name" value="MFS general substrate transporter like domains"/>
    <property type="match status" value="1"/>
</dbReference>
<dbReference type="InterPro" id="IPR020846">
    <property type="entry name" value="MFS_dom"/>
</dbReference>
<dbReference type="InterPro" id="IPR044778">
    <property type="entry name" value="MFS_STP/MST-like_plant"/>
</dbReference>
<dbReference type="InterPro" id="IPR005828">
    <property type="entry name" value="MFS_sugar_transport-like"/>
</dbReference>
<dbReference type="InterPro" id="IPR036259">
    <property type="entry name" value="MFS_trans_sf"/>
</dbReference>
<dbReference type="InterPro" id="IPR045262">
    <property type="entry name" value="STP/PLT_plant"/>
</dbReference>
<dbReference type="InterPro" id="IPR003663">
    <property type="entry name" value="Sugar/inositol_transpt"/>
</dbReference>
<dbReference type="InterPro" id="IPR005829">
    <property type="entry name" value="Sugar_transporter_CS"/>
</dbReference>
<dbReference type="NCBIfam" id="TIGR00879">
    <property type="entry name" value="SP"/>
    <property type="match status" value="1"/>
</dbReference>
<dbReference type="PANTHER" id="PTHR23500">
    <property type="entry name" value="SOLUTE CARRIER FAMILY 2, FACILITATED GLUCOSE TRANSPORTER"/>
    <property type="match status" value="1"/>
</dbReference>
<dbReference type="PANTHER" id="PTHR23500:SF590">
    <property type="entry name" value="SUGAR TRANSPORT PROTEIN 8"/>
    <property type="match status" value="1"/>
</dbReference>
<dbReference type="Pfam" id="PF00083">
    <property type="entry name" value="Sugar_tr"/>
    <property type="match status" value="1"/>
</dbReference>
<dbReference type="PRINTS" id="PR00171">
    <property type="entry name" value="SUGRTRNSPORT"/>
</dbReference>
<dbReference type="SUPFAM" id="SSF103473">
    <property type="entry name" value="MFS general substrate transporter"/>
    <property type="match status" value="1"/>
</dbReference>
<dbReference type="PROSITE" id="PS50850">
    <property type="entry name" value="MFS"/>
    <property type="match status" value="1"/>
</dbReference>
<dbReference type="PROSITE" id="PS00217">
    <property type="entry name" value="SUGAR_TRANSPORT_2"/>
    <property type="match status" value="1"/>
</dbReference>
<protein>
    <recommendedName>
        <fullName>Sugar transport protein 8</fullName>
    </recommendedName>
    <alternativeName>
        <fullName>Hexose transporter 8</fullName>
    </alternativeName>
</protein>